<sequence length="355" mass="43172">MANRTDPLAKNIRGTNPQNLVEKIVRTKIYQHTFWKEQCFGLTAETLVDKAMELDHLGGTFGGSRKPTPFLCLILKMLQIQPEKEIVVEFIKNDDYKYVRILGAFYLRLTGTDVDVYRYLEPLYNDYRKVRQKLSDGKFSLTHVDEVIEELLTKDYSCDIAMPRLKKRWTLEQNGLLEPRKSVLEDDFEEEEEKEENEGIADGSEDEMDQRRKSPERERERDRDRRRDSHRHRDRDYDRDYDMDRDHDRDYERERGHGRDRDRERDRDHYRERDRDRERGRDRERDRRDRARRRSRSRSRDRKRHETDDVRDREEPKKKKEKKEKMKEDGTDHPNPEIAEMNRLRASLGMKPLRD</sequence>
<keyword id="KW-0507">mRNA processing</keyword>
<keyword id="KW-0508">mRNA splicing</keyword>
<keyword id="KW-0539">Nucleus</keyword>
<keyword id="KW-0597">Phosphoprotein</keyword>
<keyword id="KW-1185">Reference proteome</keyword>
<keyword id="KW-0747">Spliceosome</keyword>
<gene>
    <name type="primary">PRP38</name>
    <name type="ordered locus">At2g40650</name>
    <name type="ORF">T7D17.17</name>
</gene>
<comment type="function">
    <text evidence="1">Probably required for the first pre-mRNA cleavage reaction catalyzed by the spliceosome.</text>
</comment>
<comment type="subunit">
    <text evidence="3">Interacts with SR45A.</text>
</comment>
<comment type="subcellular location">
    <subcellularLocation>
        <location evidence="3">Nucleus</location>
    </subcellularLocation>
</comment>
<comment type="similarity">
    <text evidence="4">Belongs to the PRP38 family.</text>
</comment>
<reference key="1">
    <citation type="journal article" date="1999" name="Nature">
        <title>Sequence and analysis of chromosome 2 of the plant Arabidopsis thaliana.</title>
        <authorList>
            <person name="Lin X."/>
            <person name="Kaul S."/>
            <person name="Rounsley S.D."/>
            <person name="Shea T.P."/>
            <person name="Benito M.-I."/>
            <person name="Town C.D."/>
            <person name="Fujii C.Y."/>
            <person name="Mason T.M."/>
            <person name="Bowman C.L."/>
            <person name="Barnstead M.E."/>
            <person name="Feldblyum T.V."/>
            <person name="Buell C.R."/>
            <person name="Ketchum K.A."/>
            <person name="Lee J.J."/>
            <person name="Ronning C.M."/>
            <person name="Koo H.L."/>
            <person name="Moffat K.S."/>
            <person name="Cronin L.A."/>
            <person name="Shen M."/>
            <person name="Pai G."/>
            <person name="Van Aken S."/>
            <person name="Umayam L."/>
            <person name="Tallon L.J."/>
            <person name="Gill J.E."/>
            <person name="Adams M.D."/>
            <person name="Carrera A.J."/>
            <person name="Creasy T.H."/>
            <person name="Goodman H.M."/>
            <person name="Somerville C.R."/>
            <person name="Copenhaver G.P."/>
            <person name="Preuss D."/>
            <person name="Nierman W.C."/>
            <person name="White O."/>
            <person name="Eisen J.A."/>
            <person name="Salzberg S.L."/>
            <person name="Fraser C.M."/>
            <person name="Venter J.C."/>
        </authorList>
    </citation>
    <scope>NUCLEOTIDE SEQUENCE [LARGE SCALE GENOMIC DNA]</scope>
    <source>
        <strain>cv. Columbia</strain>
    </source>
</reference>
<reference key="2">
    <citation type="journal article" date="2017" name="Plant J.">
        <title>Araport11: a complete reannotation of the Arabidopsis thaliana reference genome.</title>
        <authorList>
            <person name="Cheng C.Y."/>
            <person name="Krishnakumar V."/>
            <person name="Chan A.P."/>
            <person name="Thibaud-Nissen F."/>
            <person name="Schobel S."/>
            <person name="Town C.D."/>
        </authorList>
    </citation>
    <scope>GENOME REANNOTATION</scope>
    <source>
        <strain>cv. Columbia</strain>
    </source>
</reference>
<reference key="3">
    <citation type="submission" date="2006-07" db="EMBL/GenBank/DDBJ databases">
        <title>Large-scale analysis of RIKEN Arabidopsis full-length (RAFL) cDNAs.</title>
        <authorList>
            <person name="Totoki Y."/>
            <person name="Seki M."/>
            <person name="Ishida J."/>
            <person name="Nakajima M."/>
            <person name="Enju A."/>
            <person name="Kamiya A."/>
            <person name="Narusaka M."/>
            <person name="Shin-i T."/>
            <person name="Nakagawa M."/>
            <person name="Sakamoto N."/>
            <person name="Oishi K."/>
            <person name="Kohara Y."/>
            <person name="Kobayashi M."/>
            <person name="Toyoda A."/>
            <person name="Sakaki Y."/>
            <person name="Sakurai T."/>
            <person name="Iida K."/>
            <person name="Akiyama K."/>
            <person name="Satou M."/>
            <person name="Toyoda T."/>
            <person name="Konagaya A."/>
            <person name="Carninci P."/>
            <person name="Kawai J."/>
            <person name="Hayashizaki Y."/>
            <person name="Shinozaki K."/>
        </authorList>
    </citation>
    <scope>NUCLEOTIDE SEQUENCE [LARGE SCALE MRNA]</scope>
    <source>
        <strain>cv. Columbia</strain>
    </source>
</reference>
<reference key="4">
    <citation type="submission" date="2002-03" db="EMBL/GenBank/DDBJ databases">
        <title>Full-length cDNA from Arabidopsis thaliana.</title>
        <authorList>
            <person name="Brover V.V."/>
            <person name="Troukhan M.E."/>
            <person name="Alexandrov N.A."/>
            <person name="Lu Y.-P."/>
            <person name="Flavell R.B."/>
            <person name="Feldmann K.A."/>
        </authorList>
    </citation>
    <scope>NUCLEOTIDE SEQUENCE [LARGE SCALE MRNA]</scope>
</reference>
<reference key="5">
    <citation type="journal article" date="2009" name="Plant Mol. Biol.">
        <title>Plant-specific SR-related protein atSR45a interacts with spliceosomal proteins in plant nucleus.</title>
        <authorList>
            <person name="Tanabe N."/>
            <person name="Kimura A."/>
            <person name="Yoshimura K."/>
            <person name="Shigeoka S."/>
        </authorList>
    </citation>
    <scope>INTERACTION WITH SR45A</scope>
    <scope>SUBCELLULAR LOCATION</scope>
    <source>
        <strain>cv. Columbia</strain>
    </source>
</reference>
<reference key="6">
    <citation type="journal article" date="2009" name="Plant Physiol.">
        <title>Large-scale Arabidopsis phosphoproteome profiling reveals novel chloroplast kinase substrates and phosphorylation networks.</title>
        <authorList>
            <person name="Reiland S."/>
            <person name="Messerli G."/>
            <person name="Baerenfaller K."/>
            <person name="Gerrits B."/>
            <person name="Endler A."/>
            <person name="Grossmann J."/>
            <person name="Gruissem W."/>
            <person name="Baginsky S."/>
        </authorList>
    </citation>
    <scope>PHOSPHORYLATION [LARGE SCALE ANALYSIS] AT SER-204</scope>
    <scope>IDENTIFICATION BY MASS SPECTROMETRY [LARGE SCALE ANALYSIS]</scope>
</reference>
<dbReference type="EMBL" id="CP002685">
    <property type="protein sequence ID" value="AEC09860.1"/>
    <property type="molecule type" value="Genomic_DNA"/>
</dbReference>
<dbReference type="EMBL" id="AK228762">
    <property type="protein sequence ID" value="BAF00662.1"/>
    <property type="molecule type" value="mRNA"/>
</dbReference>
<dbReference type="EMBL" id="AY087415">
    <property type="protein sequence ID" value="AAM64964.1"/>
    <property type="molecule type" value="mRNA"/>
</dbReference>
<dbReference type="RefSeq" id="NP_565937.1">
    <property type="nucleotide sequence ID" value="NM_129627.3"/>
</dbReference>
<dbReference type="SMR" id="Q8LB54"/>
<dbReference type="BioGRID" id="3998">
    <property type="interactions" value="22"/>
</dbReference>
<dbReference type="FunCoup" id="Q8LB54">
    <property type="interactions" value="3625"/>
</dbReference>
<dbReference type="STRING" id="3702.Q8LB54"/>
<dbReference type="iPTMnet" id="Q8LB54"/>
<dbReference type="PaxDb" id="3702-AT2G40650.1"/>
<dbReference type="ProteomicsDB" id="226378"/>
<dbReference type="EnsemblPlants" id="AT2G40650.1">
    <property type="protein sequence ID" value="AT2G40650.1"/>
    <property type="gene ID" value="AT2G40650"/>
</dbReference>
<dbReference type="GeneID" id="818660"/>
<dbReference type="Gramene" id="AT2G40650.1">
    <property type="protein sequence ID" value="AT2G40650.1"/>
    <property type="gene ID" value="AT2G40650"/>
</dbReference>
<dbReference type="KEGG" id="ath:AT2G40650"/>
<dbReference type="Araport" id="AT2G40650"/>
<dbReference type="TAIR" id="AT2G40650"/>
<dbReference type="eggNOG" id="KOG2889">
    <property type="taxonomic scope" value="Eukaryota"/>
</dbReference>
<dbReference type="HOGENOM" id="CLU_039466_1_2_1"/>
<dbReference type="InParanoid" id="Q8LB54"/>
<dbReference type="OMA" id="HTYWKEQ"/>
<dbReference type="OrthoDB" id="190958at2759"/>
<dbReference type="PhylomeDB" id="Q8LB54"/>
<dbReference type="PRO" id="PR:Q8LB54"/>
<dbReference type="Proteomes" id="UP000006548">
    <property type="component" value="Chromosome 2"/>
</dbReference>
<dbReference type="ExpressionAtlas" id="Q8LB54">
    <property type="expression patterns" value="baseline and differential"/>
</dbReference>
<dbReference type="GO" id="GO:0005681">
    <property type="term" value="C:spliceosomal complex"/>
    <property type="evidence" value="ECO:0007669"/>
    <property type="project" value="UniProtKB-KW"/>
</dbReference>
<dbReference type="GO" id="GO:0006397">
    <property type="term" value="P:mRNA processing"/>
    <property type="evidence" value="ECO:0007669"/>
    <property type="project" value="UniProtKB-KW"/>
</dbReference>
<dbReference type="GO" id="GO:0008380">
    <property type="term" value="P:RNA splicing"/>
    <property type="evidence" value="ECO:0007669"/>
    <property type="project" value="UniProtKB-KW"/>
</dbReference>
<dbReference type="InterPro" id="IPR005037">
    <property type="entry name" value="PRP38"/>
</dbReference>
<dbReference type="InterPro" id="IPR024767">
    <property type="entry name" value="PRP38_C"/>
</dbReference>
<dbReference type="PANTHER" id="PTHR23142">
    <property type="entry name" value="PRE-MRNA-SPLICING FACTOR 38A-RELATED"/>
    <property type="match status" value="1"/>
</dbReference>
<dbReference type="Pfam" id="PF03371">
    <property type="entry name" value="PRP38"/>
    <property type="match status" value="1"/>
</dbReference>
<dbReference type="Pfam" id="PF12871">
    <property type="entry name" value="PRP38_assoc"/>
    <property type="match status" value="1"/>
</dbReference>
<proteinExistence type="evidence at protein level"/>
<feature type="chain" id="PRO_0000429606" description="Pre-mRNA-splicing factor 38">
    <location>
        <begin position="1"/>
        <end position="355"/>
    </location>
</feature>
<feature type="region of interest" description="Disordered" evidence="2">
    <location>
        <begin position="182"/>
        <end position="355"/>
    </location>
</feature>
<feature type="compositionally biased region" description="Acidic residues" evidence="2">
    <location>
        <begin position="185"/>
        <end position="208"/>
    </location>
</feature>
<feature type="compositionally biased region" description="Basic and acidic residues" evidence="2">
    <location>
        <begin position="209"/>
        <end position="227"/>
    </location>
</feature>
<feature type="compositionally biased region" description="Basic and acidic residues" evidence="2">
    <location>
        <begin position="234"/>
        <end position="289"/>
    </location>
</feature>
<feature type="compositionally biased region" description="Basic residues" evidence="2">
    <location>
        <begin position="290"/>
        <end position="303"/>
    </location>
</feature>
<feature type="compositionally biased region" description="Basic and acidic residues" evidence="2">
    <location>
        <begin position="304"/>
        <end position="343"/>
    </location>
</feature>
<feature type="modified residue" description="Phosphoserine" evidence="5">
    <location>
        <position position="204"/>
    </location>
</feature>
<feature type="sequence conflict" description="In Ref. 3; BAF00662." evidence="4" ref="3">
    <original>E</original>
    <variation>G</variation>
    <location>
        <position position="149"/>
    </location>
</feature>
<name>PRP38_ARATH</name>
<protein>
    <recommendedName>
        <fullName>Pre-mRNA-splicing factor 38</fullName>
    </recommendedName>
</protein>
<accession>Q8LB54</accession>
<accession>Q0WQD7</accession>
<organism>
    <name type="scientific">Arabidopsis thaliana</name>
    <name type="common">Mouse-ear cress</name>
    <dbReference type="NCBI Taxonomy" id="3702"/>
    <lineage>
        <taxon>Eukaryota</taxon>
        <taxon>Viridiplantae</taxon>
        <taxon>Streptophyta</taxon>
        <taxon>Embryophyta</taxon>
        <taxon>Tracheophyta</taxon>
        <taxon>Spermatophyta</taxon>
        <taxon>Magnoliopsida</taxon>
        <taxon>eudicotyledons</taxon>
        <taxon>Gunneridae</taxon>
        <taxon>Pentapetalae</taxon>
        <taxon>rosids</taxon>
        <taxon>malvids</taxon>
        <taxon>Brassicales</taxon>
        <taxon>Brassicaceae</taxon>
        <taxon>Camelineae</taxon>
        <taxon>Arabidopsis</taxon>
    </lineage>
</organism>
<evidence type="ECO:0000250" key="1"/>
<evidence type="ECO:0000256" key="2">
    <source>
        <dbReference type="SAM" id="MobiDB-lite"/>
    </source>
</evidence>
<evidence type="ECO:0000269" key="3">
    <source>
    </source>
</evidence>
<evidence type="ECO:0000305" key="4"/>
<evidence type="ECO:0007744" key="5">
    <source>
    </source>
</evidence>